<organism>
    <name type="scientific">Schizosaccharomyces pombe (strain 972 / ATCC 24843)</name>
    <name type="common">Fission yeast</name>
    <dbReference type="NCBI Taxonomy" id="284812"/>
    <lineage>
        <taxon>Eukaryota</taxon>
        <taxon>Fungi</taxon>
        <taxon>Dikarya</taxon>
        <taxon>Ascomycota</taxon>
        <taxon>Taphrinomycotina</taxon>
        <taxon>Schizosaccharomycetes</taxon>
        <taxon>Schizosaccharomycetales</taxon>
        <taxon>Schizosaccharomycetaceae</taxon>
        <taxon>Schizosaccharomyces</taxon>
    </lineage>
</organism>
<keyword id="KW-0597">Phosphoprotein</keyword>
<keyword id="KW-1185">Reference proteome</keyword>
<protein>
    <recommendedName>
        <fullName>Casein kinase II subunit beta</fullName>
        <shortName>CK II beta</shortName>
    </recommendedName>
</protein>
<evidence type="ECO:0000250" key="1">
    <source>
        <dbReference type="UniProtKB" id="P43639"/>
    </source>
</evidence>
<evidence type="ECO:0000250" key="2">
    <source>
        <dbReference type="UniProtKB" id="P67870"/>
    </source>
</evidence>
<evidence type="ECO:0000305" key="3"/>
<evidence type="ECO:0000312" key="4">
    <source>
        <dbReference type="PomBase" id="SPAC1851.03"/>
    </source>
</evidence>
<reference key="1">
    <citation type="journal article" date="1994" name="Mol. Cell. Biol.">
        <title>The Schizosaccharomyces pombe casein kinase II alpha and beta subunits: evolutionary conservation and positive role of the beta subunit.</title>
        <authorList>
            <person name="Roussou I."/>
            <person name="Draetta G."/>
        </authorList>
    </citation>
    <scope>NUCLEOTIDE SEQUENCE [MRNA]</scope>
</reference>
<reference key="2">
    <citation type="journal article" date="2002" name="Nature">
        <title>The genome sequence of Schizosaccharomyces pombe.</title>
        <authorList>
            <person name="Wood V."/>
            <person name="Gwilliam R."/>
            <person name="Rajandream M.A."/>
            <person name="Lyne M.H."/>
            <person name="Lyne R."/>
            <person name="Stewart A."/>
            <person name="Sgouros J.G."/>
            <person name="Peat N."/>
            <person name="Hayles J."/>
            <person name="Baker S.G."/>
            <person name="Basham D."/>
            <person name="Bowman S."/>
            <person name="Brooks K."/>
            <person name="Brown D."/>
            <person name="Brown S."/>
            <person name="Chillingworth T."/>
            <person name="Churcher C.M."/>
            <person name="Collins M."/>
            <person name="Connor R."/>
            <person name="Cronin A."/>
            <person name="Davis P."/>
            <person name="Feltwell T."/>
            <person name="Fraser A."/>
            <person name="Gentles S."/>
            <person name="Goble A."/>
            <person name="Hamlin N."/>
            <person name="Harris D.E."/>
            <person name="Hidalgo J."/>
            <person name="Hodgson G."/>
            <person name="Holroyd S."/>
            <person name="Hornsby T."/>
            <person name="Howarth S."/>
            <person name="Huckle E.J."/>
            <person name="Hunt S."/>
            <person name="Jagels K."/>
            <person name="James K.D."/>
            <person name="Jones L."/>
            <person name="Jones M."/>
            <person name="Leather S."/>
            <person name="McDonald S."/>
            <person name="McLean J."/>
            <person name="Mooney P."/>
            <person name="Moule S."/>
            <person name="Mungall K.L."/>
            <person name="Murphy L.D."/>
            <person name="Niblett D."/>
            <person name="Odell C."/>
            <person name="Oliver K."/>
            <person name="O'Neil S."/>
            <person name="Pearson D."/>
            <person name="Quail M.A."/>
            <person name="Rabbinowitsch E."/>
            <person name="Rutherford K.M."/>
            <person name="Rutter S."/>
            <person name="Saunders D."/>
            <person name="Seeger K."/>
            <person name="Sharp S."/>
            <person name="Skelton J."/>
            <person name="Simmonds M.N."/>
            <person name="Squares R."/>
            <person name="Squares S."/>
            <person name="Stevens K."/>
            <person name="Taylor K."/>
            <person name="Taylor R.G."/>
            <person name="Tivey A."/>
            <person name="Walsh S.V."/>
            <person name="Warren T."/>
            <person name="Whitehead S."/>
            <person name="Woodward J.R."/>
            <person name="Volckaert G."/>
            <person name="Aert R."/>
            <person name="Robben J."/>
            <person name="Grymonprez B."/>
            <person name="Weltjens I."/>
            <person name="Vanstreels E."/>
            <person name="Rieger M."/>
            <person name="Schaefer M."/>
            <person name="Mueller-Auer S."/>
            <person name="Gabel C."/>
            <person name="Fuchs M."/>
            <person name="Duesterhoeft A."/>
            <person name="Fritzc C."/>
            <person name="Holzer E."/>
            <person name="Moestl D."/>
            <person name="Hilbert H."/>
            <person name="Borzym K."/>
            <person name="Langer I."/>
            <person name="Beck A."/>
            <person name="Lehrach H."/>
            <person name="Reinhardt R."/>
            <person name="Pohl T.M."/>
            <person name="Eger P."/>
            <person name="Zimmermann W."/>
            <person name="Wedler H."/>
            <person name="Wambutt R."/>
            <person name="Purnelle B."/>
            <person name="Goffeau A."/>
            <person name="Cadieu E."/>
            <person name="Dreano S."/>
            <person name="Gloux S."/>
            <person name="Lelaure V."/>
            <person name="Mottier S."/>
            <person name="Galibert F."/>
            <person name="Aves S.J."/>
            <person name="Xiang Z."/>
            <person name="Hunt C."/>
            <person name="Moore K."/>
            <person name="Hurst S.M."/>
            <person name="Lucas M."/>
            <person name="Rochet M."/>
            <person name="Gaillardin C."/>
            <person name="Tallada V.A."/>
            <person name="Garzon A."/>
            <person name="Thode G."/>
            <person name="Daga R.R."/>
            <person name="Cruzado L."/>
            <person name="Jimenez J."/>
            <person name="Sanchez M."/>
            <person name="del Rey F."/>
            <person name="Benito J."/>
            <person name="Dominguez A."/>
            <person name="Revuelta J.L."/>
            <person name="Moreno S."/>
            <person name="Armstrong J."/>
            <person name="Forsburg S.L."/>
            <person name="Cerutti L."/>
            <person name="Lowe T."/>
            <person name="McCombie W.R."/>
            <person name="Paulsen I."/>
            <person name="Potashkin J."/>
            <person name="Shpakovski G.V."/>
            <person name="Ussery D."/>
            <person name="Barrell B.G."/>
            <person name="Nurse P."/>
        </authorList>
    </citation>
    <scope>NUCLEOTIDE SEQUENCE [LARGE SCALE GENOMIC DNA]</scope>
    <source>
        <strain>972 / ATCC 24843</strain>
    </source>
</reference>
<accession>P40232</accession>
<accession>Q9US19</accession>
<gene>
    <name evidence="4" type="primary">ckb1</name>
    <name evidence="4" type="ORF">SPAC1851.03</name>
</gene>
<proteinExistence type="evidence at transcript level"/>
<feature type="chain" id="PRO_0000068255" description="Casein kinase II subunit beta">
    <location>
        <begin position="1"/>
        <end position="231"/>
    </location>
</feature>
<feature type="sequence conflict" description="In Ref. 1; CAA52330." evidence="3" ref="1">
    <original>T</original>
    <variation>A</variation>
    <location>
        <position position="134"/>
    </location>
</feature>
<name>CSK2B_SCHPO</name>
<dbReference type="EMBL" id="X74274">
    <property type="protein sequence ID" value="CAA52330.1"/>
    <property type="molecule type" value="mRNA"/>
</dbReference>
<dbReference type="EMBL" id="CU329670">
    <property type="protein sequence ID" value="CAB62429.1"/>
    <property type="molecule type" value="Genomic_DNA"/>
</dbReference>
<dbReference type="PIR" id="T50126">
    <property type="entry name" value="T50126"/>
</dbReference>
<dbReference type="RefSeq" id="NP_594606.1">
    <property type="nucleotide sequence ID" value="NM_001020034.2"/>
</dbReference>
<dbReference type="SMR" id="P40232"/>
<dbReference type="BioGRID" id="279020">
    <property type="interactions" value="18"/>
</dbReference>
<dbReference type="FunCoup" id="P40232">
    <property type="interactions" value="524"/>
</dbReference>
<dbReference type="STRING" id="284812.P40232"/>
<dbReference type="iPTMnet" id="P40232"/>
<dbReference type="PaxDb" id="4896-SPAC1851.03.1"/>
<dbReference type="EnsemblFungi" id="SPAC1851.03.1">
    <property type="protein sequence ID" value="SPAC1851.03.1:pep"/>
    <property type="gene ID" value="SPAC1851.03"/>
</dbReference>
<dbReference type="PomBase" id="SPAC1851.03">
    <property type="gene designation" value="ckb1"/>
</dbReference>
<dbReference type="VEuPathDB" id="FungiDB:SPAC1851.03"/>
<dbReference type="eggNOG" id="KOG3092">
    <property type="taxonomic scope" value="Eukaryota"/>
</dbReference>
<dbReference type="HOGENOM" id="CLU_034027_3_2_1"/>
<dbReference type="InParanoid" id="P40232"/>
<dbReference type="OMA" id="DADFGRC"/>
<dbReference type="PhylomeDB" id="P40232"/>
<dbReference type="Reactome" id="R-SPO-2514853">
    <property type="pathway name" value="Condensation of Prometaphase Chromosomes"/>
</dbReference>
<dbReference type="Reactome" id="R-SPO-6798695">
    <property type="pathway name" value="Neutrophil degranulation"/>
</dbReference>
<dbReference type="Reactome" id="R-SPO-6804756">
    <property type="pathway name" value="Regulation of TP53 Activity through Phosphorylation"/>
</dbReference>
<dbReference type="Reactome" id="R-SPO-8934903">
    <property type="pathway name" value="Receptor Mediated Mitophagy"/>
</dbReference>
<dbReference type="Reactome" id="R-SPO-8948751">
    <property type="pathway name" value="Regulation of PTEN stability and activity"/>
</dbReference>
<dbReference type="PRO" id="PR:P40232"/>
<dbReference type="Proteomes" id="UP000002485">
    <property type="component" value="Chromosome I"/>
</dbReference>
<dbReference type="GO" id="GO:0005737">
    <property type="term" value="C:cytoplasm"/>
    <property type="evidence" value="ECO:0000318"/>
    <property type="project" value="GO_Central"/>
</dbReference>
<dbReference type="GO" id="GO:0044732">
    <property type="term" value="C:mitotic spindle pole body"/>
    <property type="evidence" value="ECO:0007005"/>
    <property type="project" value="PomBase"/>
</dbReference>
<dbReference type="GO" id="GO:0005634">
    <property type="term" value="C:nucleus"/>
    <property type="evidence" value="ECO:0007005"/>
    <property type="project" value="PomBase"/>
</dbReference>
<dbReference type="GO" id="GO:0005956">
    <property type="term" value="C:protein kinase CK2 complex"/>
    <property type="evidence" value="ECO:0000353"/>
    <property type="project" value="PomBase"/>
</dbReference>
<dbReference type="GO" id="GO:0034456">
    <property type="term" value="C:UTP-C complex"/>
    <property type="evidence" value="ECO:0000318"/>
    <property type="project" value="GO_Central"/>
</dbReference>
<dbReference type="GO" id="GO:0019887">
    <property type="term" value="F:protein kinase regulator activity"/>
    <property type="evidence" value="ECO:0000318"/>
    <property type="project" value="GO_Central"/>
</dbReference>
<dbReference type="GO" id="GO:0043539">
    <property type="term" value="F:protein serine/threonine kinase activator activity"/>
    <property type="evidence" value="ECO:0000314"/>
    <property type="project" value="PomBase"/>
</dbReference>
<dbReference type="GO" id="GO:0000122">
    <property type="term" value="P:negative regulation of transcription by RNA polymerase II"/>
    <property type="evidence" value="ECO:0000314"/>
    <property type="project" value="PomBase"/>
</dbReference>
<dbReference type="GO" id="GO:0090053">
    <property type="term" value="P:positive regulation of pericentric heterochromatin formation"/>
    <property type="evidence" value="ECO:0000315"/>
    <property type="project" value="CACAO"/>
</dbReference>
<dbReference type="GO" id="GO:0090055">
    <property type="term" value="P:positive regulation of silent mating-type cassette heterochromatin formation"/>
    <property type="evidence" value="ECO:0000315"/>
    <property type="project" value="PomBase"/>
</dbReference>
<dbReference type="GO" id="GO:0006468">
    <property type="term" value="P:protein phosphorylation"/>
    <property type="evidence" value="ECO:0000315"/>
    <property type="project" value="CACAO"/>
</dbReference>
<dbReference type="GO" id="GO:0006359">
    <property type="term" value="P:regulation of transcription by RNA polymerase III"/>
    <property type="evidence" value="ECO:0000318"/>
    <property type="project" value="GO_Central"/>
</dbReference>
<dbReference type="GO" id="GO:0007165">
    <property type="term" value="P:signal transduction"/>
    <property type="evidence" value="ECO:0000305"/>
    <property type="project" value="PomBase"/>
</dbReference>
<dbReference type="FunFam" id="1.10.1820.10:FF:000010">
    <property type="entry name" value="Casein kinase II subunit beta"/>
    <property type="match status" value="1"/>
</dbReference>
<dbReference type="FunFam" id="2.20.25.20:FF:000002">
    <property type="entry name" value="Casein kinase II subunit beta"/>
    <property type="match status" value="1"/>
</dbReference>
<dbReference type="Gene3D" id="2.20.25.20">
    <property type="match status" value="1"/>
</dbReference>
<dbReference type="Gene3D" id="1.10.1820.10">
    <property type="entry name" value="protein kinase ck2 holoenzyme, chain C, domain 1"/>
    <property type="match status" value="1"/>
</dbReference>
<dbReference type="InterPro" id="IPR016149">
    <property type="entry name" value="Casein_kin_II_reg-sub_N"/>
</dbReference>
<dbReference type="InterPro" id="IPR035991">
    <property type="entry name" value="Casein_kinase_II_beta-like"/>
</dbReference>
<dbReference type="InterPro" id="IPR000704">
    <property type="entry name" value="Casein_kinase_II_reg-sub"/>
</dbReference>
<dbReference type="PANTHER" id="PTHR11740">
    <property type="entry name" value="CASEIN KINASE II SUBUNIT BETA"/>
    <property type="match status" value="1"/>
</dbReference>
<dbReference type="PANTHER" id="PTHR11740:SF39">
    <property type="entry name" value="CASEIN KINASE II SUBUNIT BETA"/>
    <property type="match status" value="1"/>
</dbReference>
<dbReference type="Pfam" id="PF01214">
    <property type="entry name" value="CK_II_beta"/>
    <property type="match status" value="1"/>
</dbReference>
<dbReference type="PRINTS" id="PR00472">
    <property type="entry name" value="CASNKINASEII"/>
</dbReference>
<dbReference type="SMART" id="SM01085">
    <property type="entry name" value="CK_II_beta"/>
    <property type="match status" value="1"/>
</dbReference>
<dbReference type="SUPFAM" id="SSF57798">
    <property type="entry name" value="Casein kinase II beta subunit"/>
    <property type="match status" value="1"/>
</dbReference>
<dbReference type="PROSITE" id="PS01101">
    <property type="entry name" value="CK2_BETA"/>
    <property type="match status" value="1"/>
</dbReference>
<sequence length="231" mass="26677">MQLYSSESESDDSQYWVDWFLGLKGNEFFCEVDEDFIQDRFNLTGLSHEVPHYSQSLDLILDVLDPDLPEEVQDEVEASARHLYGLIHARYILTAQGLYKMLEKYKKCDFGHCPRVLCNGQPMLPVGLSDIAHTKSVKLYCPRCEDVYTPKSQRHASIDGAYFGTSFPHMLFQVYPELAVPKSQERYIPRIFGFKVHSYSATFKKQDVYKEKQKKRLQGAEAESKNKLAIT</sequence>
<comment type="function">
    <text evidence="2">Regulatory subunit of casein kinase II/CK2 (By similarity). As part of the kinase complex regulates the basal catalytic activity of the alpha subunit a constitutively active serine/threonine-protein kinase that phosphorylates a large number of substrates containing acidic residues C-terminal to the phosphorylated serine or threonine (By similarity).</text>
</comment>
<comment type="subunit">
    <text evidence="1">Tetramer composed of two alpha chains, one beta chain and one beta' chain.</text>
</comment>
<comment type="PTM">
    <text evidence="2">Phosphorylated by alpha subunit.</text>
</comment>
<comment type="similarity">
    <text evidence="3">Belongs to the casein kinase 2 subunit beta family.</text>
</comment>